<evidence type="ECO:0000255" key="1">
    <source>
        <dbReference type="PROSITE-ProRule" id="PRU01182"/>
    </source>
</evidence>
<evidence type="ECO:0000305" key="2"/>
<comment type="similarity">
    <text evidence="2">Belongs to the UPF0758 family.</text>
</comment>
<accession>A6WIA6</accession>
<reference key="1">
    <citation type="submission" date="2007-07" db="EMBL/GenBank/DDBJ databases">
        <title>Complete sequence of chromosome of Shewanella baltica OS185.</title>
        <authorList>
            <consortium name="US DOE Joint Genome Institute"/>
            <person name="Copeland A."/>
            <person name="Lucas S."/>
            <person name="Lapidus A."/>
            <person name="Barry K."/>
            <person name="Glavina del Rio T."/>
            <person name="Dalin E."/>
            <person name="Tice H."/>
            <person name="Pitluck S."/>
            <person name="Sims D."/>
            <person name="Brettin T."/>
            <person name="Bruce D."/>
            <person name="Detter J.C."/>
            <person name="Han C."/>
            <person name="Schmutz J."/>
            <person name="Larimer F."/>
            <person name="Land M."/>
            <person name="Hauser L."/>
            <person name="Kyrpides N."/>
            <person name="Mikhailova N."/>
            <person name="Brettar I."/>
            <person name="Rodrigues J."/>
            <person name="Konstantinidis K."/>
            <person name="Tiedje J."/>
            <person name="Richardson P."/>
        </authorList>
    </citation>
    <scope>NUCLEOTIDE SEQUENCE [LARGE SCALE GENOMIC DNA]</scope>
    <source>
        <strain>OS185</strain>
    </source>
</reference>
<organism>
    <name type="scientific">Shewanella baltica (strain OS185)</name>
    <dbReference type="NCBI Taxonomy" id="402882"/>
    <lineage>
        <taxon>Bacteria</taxon>
        <taxon>Pseudomonadati</taxon>
        <taxon>Pseudomonadota</taxon>
        <taxon>Gammaproteobacteria</taxon>
        <taxon>Alteromonadales</taxon>
        <taxon>Shewanellaceae</taxon>
        <taxon>Shewanella</taxon>
    </lineage>
</organism>
<dbReference type="EMBL" id="CP000753">
    <property type="protein sequence ID" value="ABS06545.1"/>
    <property type="molecule type" value="Genomic_DNA"/>
</dbReference>
<dbReference type="RefSeq" id="WP_011982216.1">
    <property type="nucleotide sequence ID" value="NC_009665.1"/>
</dbReference>
<dbReference type="SMR" id="A6WIA6"/>
<dbReference type="KEGG" id="sbm:Shew185_0376"/>
<dbReference type="HOGENOM" id="CLU_073529_0_1_6"/>
<dbReference type="GO" id="GO:0046872">
    <property type="term" value="F:metal ion binding"/>
    <property type="evidence" value="ECO:0007669"/>
    <property type="project" value="UniProtKB-KW"/>
</dbReference>
<dbReference type="GO" id="GO:0008237">
    <property type="term" value="F:metallopeptidase activity"/>
    <property type="evidence" value="ECO:0007669"/>
    <property type="project" value="UniProtKB-KW"/>
</dbReference>
<dbReference type="GO" id="GO:0006508">
    <property type="term" value="P:proteolysis"/>
    <property type="evidence" value="ECO:0007669"/>
    <property type="project" value="UniProtKB-KW"/>
</dbReference>
<dbReference type="CDD" id="cd08071">
    <property type="entry name" value="MPN_DUF2466"/>
    <property type="match status" value="1"/>
</dbReference>
<dbReference type="FunFam" id="3.40.140.10:FF:000032">
    <property type="entry name" value="DNA repair protein RadC"/>
    <property type="match status" value="1"/>
</dbReference>
<dbReference type="Gene3D" id="3.40.140.10">
    <property type="entry name" value="Cytidine Deaminase, domain 2"/>
    <property type="match status" value="1"/>
</dbReference>
<dbReference type="InterPro" id="IPR037518">
    <property type="entry name" value="MPN"/>
</dbReference>
<dbReference type="InterPro" id="IPR025657">
    <property type="entry name" value="RadC_JAB"/>
</dbReference>
<dbReference type="InterPro" id="IPR010994">
    <property type="entry name" value="RuvA_2-like"/>
</dbReference>
<dbReference type="InterPro" id="IPR001405">
    <property type="entry name" value="UPF0758"/>
</dbReference>
<dbReference type="InterPro" id="IPR020891">
    <property type="entry name" value="UPF0758_CS"/>
</dbReference>
<dbReference type="InterPro" id="IPR046778">
    <property type="entry name" value="UPF0758_N"/>
</dbReference>
<dbReference type="NCBIfam" id="NF000642">
    <property type="entry name" value="PRK00024.1"/>
    <property type="match status" value="1"/>
</dbReference>
<dbReference type="NCBIfam" id="TIGR00608">
    <property type="entry name" value="radc"/>
    <property type="match status" value="1"/>
</dbReference>
<dbReference type="PANTHER" id="PTHR30471">
    <property type="entry name" value="DNA REPAIR PROTEIN RADC"/>
    <property type="match status" value="1"/>
</dbReference>
<dbReference type="PANTHER" id="PTHR30471:SF3">
    <property type="entry name" value="UPF0758 PROTEIN YEES-RELATED"/>
    <property type="match status" value="1"/>
</dbReference>
<dbReference type="Pfam" id="PF04002">
    <property type="entry name" value="RadC"/>
    <property type="match status" value="1"/>
</dbReference>
<dbReference type="Pfam" id="PF20582">
    <property type="entry name" value="UPF0758_N"/>
    <property type="match status" value="1"/>
</dbReference>
<dbReference type="SUPFAM" id="SSF102712">
    <property type="entry name" value="JAB1/MPN domain"/>
    <property type="match status" value="1"/>
</dbReference>
<dbReference type="SUPFAM" id="SSF47781">
    <property type="entry name" value="RuvA domain 2-like"/>
    <property type="match status" value="1"/>
</dbReference>
<dbReference type="PROSITE" id="PS50249">
    <property type="entry name" value="MPN"/>
    <property type="match status" value="1"/>
</dbReference>
<dbReference type="PROSITE" id="PS01302">
    <property type="entry name" value="UPF0758"/>
    <property type="match status" value="1"/>
</dbReference>
<keyword id="KW-0378">Hydrolase</keyword>
<keyword id="KW-0479">Metal-binding</keyword>
<keyword id="KW-0482">Metalloprotease</keyword>
<keyword id="KW-0645">Protease</keyword>
<keyword id="KW-0862">Zinc</keyword>
<gene>
    <name type="ordered locus">Shew185_0376</name>
</gene>
<protein>
    <recommendedName>
        <fullName>UPF0758 protein Shew185_0376</fullName>
    </recommendedName>
</protein>
<name>Y376_SHEB8</name>
<feature type="chain" id="PRO_1000001691" description="UPF0758 protein Shew185_0376">
    <location>
        <begin position="1"/>
        <end position="225"/>
    </location>
</feature>
<feature type="domain" description="MPN" evidence="1">
    <location>
        <begin position="102"/>
        <end position="224"/>
    </location>
</feature>
<feature type="short sequence motif" description="JAMM motif" evidence="1">
    <location>
        <begin position="173"/>
        <end position="186"/>
    </location>
</feature>
<feature type="binding site" evidence="1">
    <location>
        <position position="173"/>
    </location>
    <ligand>
        <name>Zn(2+)</name>
        <dbReference type="ChEBI" id="CHEBI:29105"/>
        <note>catalytic</note>
    </ligand>
</feature>
<feature type="binding site" evidence="1">
    <location>
        <position position="175"/>
    </location>
    <ligand>
        <name>Zn(2+)</name>
        <dbReference type="ChEBI" id="CHEBI:29105"/>
        <note>catalytic</note>
    </ligand>
</feature>
<feature type="binding site" evidence="1">
    <location>
        <position position="186"/>
    </location>
    <ligand>
        <name>Zn(2+)</name>
        <dbReference type="ChEBI" id="CHEBI:29105"/>
        <note>catalytic</note>
    </ligand>
</feature>
<sequence length="225" mass="24798">MGIKDWPEGEGPRDKLLQKGAGQLSDAELLAVLLRNGLAGLNAVDLARSLISEFGGLRNLLCAPRNQVCRLPGVGPVKYAQLQAAAELARRVAQENLQRGQVLTNPDLTRDYLMRQLADRSYEVFAVLLLDSQHRVIQFVELFRGTIDSASVYPREVVSLVLEKKAAAVIVCHNHPSGNAEPSQADRRITERLKNALATIDVSLLDHMVVGDREIVSFAERGWIN</sequence>
<proteinExistence type="inferred from homology"/>